<proteinExistence type="inferred from homology"/>
<reference key="1">
    <citation type="journal article" date="2004" name="Proc. Natl. Acad. Sci. U.S.A.">
        <title>The louse-borne human pathogen Bartonella quintana is a genomic derivative of the zoonotic agent Bartonella henselae.</title>
        <authorList>
            <person name="Alsmark U.C.M."/>
            <person name="Frank A.C."/>
            <person name="Karlberg E.O."/>
            <person name="Legault B.-A."/>
            <person name="Ardell D.H."/>
            <person name="Canbaeck B."/>
            <person name="Eriksson A.-S."/>
            <person name="Naeslund A.K."/>
            <person name="Handley S.A."/>
            <person name="Huvet M."/>
            <person name="La Scola B."/>
            <person name="Holmberg M."/>
            <person name="Andersson S.G.E."/>
        </authorList>
    </citation>
    <scope>NUCLEOTIDE SEQUENCE [LARGE SCALE GENOMIC DNA]</scope>
    <source>
        <strain>Toulouse</strain>
    </source>
</reference>
<evidence type="ECO:0000255" key="1">
    <source>
        <dbReference type="HAMAP-Rule" id="MF_00147"/>
    </source>
</evidence>
<sequence length="254" mass="27137">MSPNIRPFIAGNWKMNGTVESLGELRAIAAGVSSDLGHLFEALICVPATLLSRASDALSGENLLLGGQNCHFDDCGPYTGDISAFMLKEAGASHVIIGHSERRTVYQESDAIVCAKVQAAWRAGLVALICVGETLEERTSNKVFNVLTRQLEGSLPDGATAENVIIAYEPVWAIGTGNSPTSAVVAEVHDFIRHKMCSRFGDDGRKMRLLYGGSVKPSNAFELLSTVHVNGALIGGASLKAIDFLTICDVYRKL</sequence>
<protein>
    <recommendedName>
        <fullName evidence="1">Triosephosphate isomerase</fullName>
        <shortName evidence="1">TIM</shortName>
        <shortName evidence="1">TPI</shortName>
        <ecNumber evidence="1">5.3.1.1</ecNumber>
    </recommendedName>
    <alternativeName>
        <fullName evidence="1">Triose-phosphate isomerase</fullName>
    </alternativeName>
</protein>
<name>TPIS_BARQU</name>
<keyword id="KW-0963">Cytoplasm</keyword>
<keyword id="KW-0312">Gluconeogenesis</keyword>
<keyword id="KW-0324">Glycolysis</keyword>
<keyword id="KW-0413">Isomerase</keyword>
<dbReference type="EC" id="5.3.1.1" evidence="1"/>
<dbReference type="EMBL" id="BX897700">
    <property type="protein sequence ID" value="CAF25983.1"/>
    <property type="molecule type" value="Genomic_DNA"/>
</dbReference>
<dbReference type="RefSeq" id="WP_011179269.1">
    <property type="nucleotide sequence ID" value="NC_005955.1"/>
</dbReference>
<dbReference type="SMR" id="Q6G029"/>
<dbReference type="GeneID" id="56533148"/>
<dbReference type="KEGG" id="bqu:BQ04840"/>
<dbReference type="eggNOG" id="COG0149">
    <property type="taxonomic scope" value="Bacteria"/>
</dbReference>
<dbReference type="HOGENOM" id="CLU_024251_2_1_5"/>
<dbReference type="OrthoDB" id="9809429at2"/>
<dbReference type="UniPathway" id="UPA00109">
    <property type="reaction ID" value="UER00189"/>
</dbReference>
<dbReference type="UniPathway" id="UPA00138"/>
<dbReference type="Proteomes" id="UP000000597">
    <property type="component" value="Chromosome"/>
</dbReference>
<dbReference type="GO" id="GO:0005829">
    <property type="term" value="C:cytosol"/>
    <property type="evidence" value="ECO:0007669"/>
    <property type="project" value="TreeGrafter"/>
</dbReference>
<dbReference type="GO" id="GO:0004807">
    <property type="term" value="F:triose-phosphate isomerase activity"/>
    <property type="evidence" value="ECO:0007669"/>
    <property type="project" value="UniProtKB-UniRule"/>
</dbReference>
<dbReference type="GO" id="GO:0006094">
    <property type="term" value="P:gluconeogenesis"/>
    <property type="evidence" value="ECO:0007669"/>
    <property type="project" value="UniProtKB-UniRule"/>
</dbReference>
<dbReference type="GO" id="GO:0046166">
    <property type="term" value="P:glyceraldehyde-3-phosphate biosynthetic process"/>
    <property type="evidence" value="ECO:0007669"/>
    <property type="project" value="TreeGrafter"/>
</dbReference>
<dbReference type="GO" id="GO:0019563">
    <property type="term" value="P:glycerol catabolic process"/>
    <property type="evidence" value="ECO:0007669"/>
    <property type="project" value="TreeGrafter"/>
</dbReference>
<dbReference type="GO" id="GO:0006096">
    <property type="term" value="P:glycolytic process"/>
    <property type="evidence" value="ECO:0007669"/>
    <property type="project" value="UniProtKB-UniRule"/>
</dbReference>
<dbReference type="CDD" id="cd00311">
    <property type="entry name" value="TIM"/>
    <property type="match status" value="1"/>
</dbReference>
<dbReference type="FunFam" id="3.20.20.70:FF:000016">
    <property type="entry name" value="Triosephosphate isomerase"/>
    <property type="match status" value="1"/>
</dbReference>
<dbReference type="Gene3D" id="3.20.20.70">
    <property type="entry name" value="Aldolase class I"/>
    <property type="match status" value="1"/>
</dbReference>
<dbReference type="HAMAP" id="MF_00147_B">
    <property type="entry name" value="TIM_B"/>
    <property type="match status" value="1"/>
</dbReference>
<dbReference type="InterPro" id="IPR013785">
    <property type="entry name" value="Aldolase_TIM"/>
</dbReference>
<dbReference type="InterPro" id="IPR035990">
    <property type="entry name" value="TIM_sf"/>
</dbReference>
<dbReference type="InterPro" id="IPR022896">
    <property type="entry name" value="TrioseP_Isoase_bac/euk"/>
</dbReference>
<dbReference type="InterPro" id="IPR000652">
    <property type="entry name" value="Triosephosphate_isomerase"/>
</dbReference>
<dbReference type="InterPro" id="IPR020861">
    <property type="entry name" value="Triosephosphate_isomerase_AS"/>
</dbReference>
<dbReference type="NCBIfam" id="TIGR00419">
    <property type="entry name" value="tim"/>
    <property type="match status" value="1"/>
</dbReference>
<dbReference type="PANTHER" id="PTHR21139">
    <property type="entry name" value="TRIOSEPHOSPHATE ISOMERASE"/>
    <property type="match status" value="1"/>
</dbReference>
<dbReference type="PANTHER" id="PTHR21139:SF42">
    <property type="entry name" value="TRIOSEPHOSPHATE ISOMERASE"/>
    <property type="match status" value="1"/>
</dbReference>
<dbReference type="Pfam" id="PF00121">
    <property type="entry name" value="TIM"/>
    <property type="match status" value="1"/>
</dbReference>
<dbReference type="SUPFAM" id="SSF51351">
    <property type="entry name" value="Triosephosphate isomerase (TIM)"/>
    <property type="match status" value="1"/>
</dbReference>
<dbReference type="PROSITE" id="PS00171">
    <property type="entry name" value="TIM_1"/>
    <property type="match status" value="1"/>
</dbReference>
<dbReference type="PROSITE" id="PS51440">
    <property type="entry name" value="TIM_2"/>
    <property type="match status" value="1"/>
</dbReference>
<comment type="function">
    <text evidence="1">Involved in the gluconeogenesis. Catalyzes stereospecifically the conversion of dihydroxyacetone phosphate (DHAP) to D-glyceraldehyde-3-phosphate (G3P).</text>
</comment>
<comment type="catalytic activity">
    <reaction evidence="1">
        <text>D-glyceraldehyde 3-phosphate = dihydroxyacetone phosphate</text>
        <dbReference type="Rhea" id="RHEA:18585"/>
        <dbReference type="ChEBI" id="CHEBI:57642"/>
        <dbReference type="ChEBI" id="CHEBI:59776"/>
        <dbReference type="EC" id="5.3.1.1"/>
    </reaction>
</comment>
<comment type="pathway">
    <text evidence="1">Carbohydrate biosynthesis; gluconeogenesis.</text>
</comment>
<comment type="pathway">
    <text evidence="1">Carbohydrate degradation; glycolysis; D-glyceraldehyde 3-phosphate from glycerone phosphate: step 1/1.</text>
</comment>
<comment type="subunit">
    <text evidence="1">Homodimer.</text>
</comment>
<comment type="subcellular location">
    <subcellularLocation>
        <location evidence="1">Cytoplasm</location>
    </subcellularLocation>
</comment>
<comment type="similarity">
    <text evidence="1">Belongs to the triosephosphate isomerase family.</text>
</comment>
<accession>Q6G029</accession>
<gene>
    <name evidence="1" type="primary">tpiA</name>
    <name type="ordered locus">BQ04840</name>
</gene>
<feature type="chain" id="PRO_0000307434" description="Triosephosphate isomerase">
    <location>
        <begin position="1"/>
        <end position="254"/>
    </location>
</feature>
<feature type="active site" description="Electrophile" evidence="1">
    <location>
        <position position="99"/>
    </location>
</feature>
<feature type="active site" description="Proton acceptor" evidence="1">
    <location>
        <position position="169"/>
    </location>
</feature>
<feature type="binding site" evidence="1">
    <location>
        <begin position="12"/>
        <end position="14"/>
    </location>
    <ligand>
        <name>substrate</name>
    </ligand>
</feature>
<feature type="binding site" evidence="1">
    <location>
        <position position="175"/>
    </location>
    <ligand>
        <name>substrate</name>
    </ligand>
</feature>
<feature type="binding site" evidence="1">
    <location>
        <position position="214"/>
    </location>
    <ligand>
        <name>substrate</name>
    </ligand>
</feature>
<feature type="binding site" evidence="1">
    <location>
        <begin position="235"/>
        <end position="236"/>
    </location>
    <ligand>
        <name>substrate</name>
    </ligand>
</feature>
<organism>
    <name type="scientific">Bartonella quintana (strain Toulouse)</name>
    <name type="common">Rochalimaea quintana</name>
    <dbReference type="NCBI Taxonomy" id="283165"/>
    <lineage>
        <taxon>Bacteria</taxon>
        <taxon>Pseudomonadati</taxon>
        <taxon>Pseudomonadota</taxon>
        <taxon>Alphaproteobacteria</taxon>
        <taxon>Hyphomicrobiales</taxon>
        <taxon>Bartonellaceae</taxon>
        <taxon>Bartonella</taxon>
    </lineage>
</organism>